<sequence length="110" mass="13581">MGQNDLVKTLRMNYLFDFYQSLLTNKQRNYLELFYLEDYSLSEIADTFNVSRQAVYDNIRRTGDLVEDYEKKLELYQKFEQRREIYDEMKQHLSNPEQIQRYIQQLEDLE</sequence>
<accession>A6QGD6</accession>
<name>Y1146_STAAE</name>
<protein>
    <recommendedName>
        <fullName evidence="1">UPF0122 protein NWMN_1146</fullName>
    </recommendedName>
</protein>
<dbReference type="EMBL" id="AP009351">
    <property type="protein sequence ID" value="BAF67418.1"/>
    <property type="molecule type" value="Genomic_DNA"/>
</dbReference>
<dbReference type="RefSeq" id="WP_000531320.1">
    <property type="nucleotide sequence ID" value="NZ_JBBIAE010000001.1"/>
</dbReference>
<dbReference type="SMR" id="A6QGD6"/>
<dbReference type="KEGG" id="sae:NWMN_1146"/>
<dbReference type="HOGENOM" id="CLU_129218_1_1_9"/>
<dbReference type="Proteomes" id="UP000006386">
    <property type="component" value="Chromosome"/>
</dbReference>
<dbReference type="Gene3D" id="1.10.10.10">
    <property type="entry name" value="Winged helix-like DNA-binding domain superfamily/Winged helix DNA-binding domain"/>
    <property type="match status" value="1"/>
</dbReference>
<dbReference type="HAMAP" id="MF_00245">
    <property type="entry name" value="UPF0122"/>
    <property type="match status" value="1"/>
</dbReference>
<dbReference type="InterPro" id="IPR013324">
    <property type="entry name" value="RNA_pol_sigma_r3/r4-like"/>
</dbReference>
<dbReference type="InterPro" id="IPR007394">
    <property type="entry name" value="UPF0122"/>
</dbReference>
<dbReference type="InterPro" id="IPR054831">
    <property type="entry name" value="UPF0122_fam_protein"/>
</dbReference>
<dbReference type="InterPro" id="IPR036388">
    <property type="entry name" value="WH-like_DNA-bd_sf"/>
</dbReference>
<dbReference type="NCBIfam" id="NF001067">
    <property type="entry name" value="PRK00118.1-2"/>
    <property type="match status" value="1"/>
</dbReference>
<dbReference type="NCBIfam" id="NF001070">
    <property type="entry name" value="PRK00118.1-6"/>
    <property type="match status" value="1"/>
</dbReference>
<dbReference type="NCBIfam" id="NF045758">
    <property type="entry name" value="YlxM"/>
    <property type="match status" value="1"/>
</dbReference>
<dbReference type="PANTHER" id="PTHR40083">
    <property type="entry name" value="UPF0122 PROTEIN CBO2450/CLC_2298"/>
    <property type="match status" value="1"/>
</dbReference>
<dbReference type="PANTHER" id="PTHR40083:SF1">
    <property type="entry name" value="UPF0122 PROTEIN YLXM"/>
    <property type="match status" value="1"/>
</dbReference>
<dbReference type="Pfam" id="PF04297">
    <property type="entry name" value="UPF0122"/>
    <property type="match status" value="1"/>
</dbReference>
<dbReference type="SUPFAM" id="SSF88659">
    <property type="entry name" value="Sigma3 and sigma4 domains of RNA polymerase sigma factors"/>
    <property type="match status" value="1"/>
</dbReference>
<evidence type="ECO:0000255" key="1">
    <source>
        <dbReference type="HAMAP-Rule" id="MF_00245"/>
    </source>
</evidence>
<organism>
    <name type="scientific">Staphylococcus aureus (strain Newman)</name>
    <dbReference type="NCBI Taxonomy" id="426430"/>
    <lineage>
        <taxon>Bacteria</taxon>
        <taxon>Bacillati</taxon>
        <taxon>Bacillota</taxon>
        <taxon>Bacilli</taxon>
        <taxon>Bacillales</taxon>
        <taxon>Staphylococcaceae</taxon>
        <taxon>Staphylococcus</taxon>
    </lineage>
</organism>
<proteinExistence type="inferred from homology"/>
<gene>
    <name type="ordered locus">NWMN_1146</name>
</gene>
<feature type="chain" id="PRO_1000071841" description="UPF0122 protein NWMN_1146">
    <location>
        <begin position="1"/>
        <end position="110"/>
    </location>
</feature>
<comment type="function">
    <text evidence="1">Might take part in the signal recognition particle (SRP) pathway. This is inferred from the conservation of its genetic proximity to ftsY/ffh. May be a regulatory protein.</text>
</comment>
<comment type="similarity">
    <text evidence="1">Belongs to the UPF0122 family.</text>
</comment>
<reference key="1">
    <citation type="journal article" date="2008" name="J. Bacteriol.">
        <title>Genome sequence of Staphylococcus aureus strain Newman and comparative analysis of staphylococcal genomes: polymorphism and evolution of two major pathogenicity islands.</title>
        <authorList>
            <person name="Baba T."/>
            <person name="Bae T."/>
            <person name="Schneewind O."/>
            <person name="Takeuchi F."/>
            <person name="Hiramatsu K."/>
        </authorList>
    </citation>
    <scope>NUCLEOTIDE SEQUENCE [LARGE SCALE GENOMIC DNA]</scope>
    <source>
        <strain>Newman</strain>
    </source>
</reference>